<organism>
    <name type="scientific">Streptococcus agalactiae serotype Ia (strain ATCC 27591 / A909 / CDC SS700)</name>
    <dbReference type="NCBI Taxonomy" id="205921"/>
    <lineage>
        <taxon>Bacteria</taxon>
        <taxon>Bacillati</taxon>
        <taxon>Bacillota</taxon>
        <taxon>Bacilli</taxon>
        <taxon>Lactobacillales</taxon>
        <taxon>Streptococcaceae</taxon>
        <taxon>Streptococcus</taxon>
    </lineage>
</organism>
<feature type="chain" id="PRO_0000386289" description="GTPase Obg">
    <location>
        <begin position="1"/>
        <end position="437"/>
    </location>
</feature>
<feature type="domain" description="Obg" evidence="3">
    <location>
        <begin position="2"/>
        <end position="160"/>
    </location>
</feature>
<feature type="domain" description="OBG-type G" evidence="1">
    <location>
        <begin position="161"/>
        <end position="338"/>
    </location>
</feature>
<feature type="domain" description="OCT" evidence="2">
    <location>
        <begin position="359"/>
        <end position="437"/>
    </location>
</feature>
<feature type="binding site" evidence="1">
    <location>
        <begin position="167"/>
        <end position="174"/>
    </location>
    <ligand>
        <name>GTP</name>
        <dbReference type="ChEBI" id="CHEBI:37565"/>
    </ligand>
</feature>
<feature type="binding site" evidence="1">
    <location>
        <position position="174"/>
    </location>
    <ligand>
        <name>Mg(2+)</name>
        <dbReference type="ChEBI" id="CHEBI:18420"/>
    </ligand>
</feature>
<feature type="binding site" evidence="1">
    <location>
        <begin position="192"/>
        <end position="196"/>
    </location>
    <ligand>
        <name>GTP</name>
        <dbReference type="ChEBI" id="CHEBI:37565"/>
    </ligand>
</feature>
<feature type="binding site" evidence="1">
    <location>
        <position position="194"/>
    </location>
    <ligand>
        <name>Mg(2+)</name>
        <dbReference type="ChEBI" id="CHEBI:18420"/>
    </ligand>
</feature>
<feature type="binding site" evidence="1">
    <location>
        <begin position="214"/>
        <end position="217"/>
    </location>
    <ligand>
        <name>GTP</name>
        <dbReference type="ChEBI" id="CHEBI:37565"/>
    </ligand>
</feature>
<feature type="binding site" evidence="1">
    <location>
        <begin position="284"/>
        <end position="287"/>
    </location>
    <ligand>
        <name>GTP</name>
        <dbReference type="ChEBI" id="CHEBI:37565"/>
    </ligand>
</feature>
<feature type="binding site" evidence="1">
    <location>
        <begin position="319"/>
        <end position="321"/>
    </location>
    <ligand>
        <name>GTP</name>
        <dbReference type="ChEBI" id="CHEBI:37565"/>
    </ligand>
</feature>
<keyword id="KW-0963">Cytoplasm</keyword>
<keyword id="KW-0342">GTP-binding</keyword>
<keyword id="KW-0378">Hydrolase</keyword>
<keyword id="KW-0460">Magnesium</keyword>
<keyword id="KW-0479">Metal-binding</keyword>
<keyword id="KW-0547">Nucleotide-binding</keyword>
<accession>Q3K046</accession>
<dbReference type="EC" id="3.6.5.-" evidence="1"/>
<dbReference type="EMBL" id="CP000114">
    <property type="protein sequence ID" value="ABA45091.1"/>
    <property type="molecule type" value="Genomic_DNA"/>
</dbReference>
<dbReference type="SMR" id="Q3K046"/>
<dbReference type="KEGG" id="sak:SAK_1500"/>
<dbReference type="HOGENOM" id="CLU_011747_2_1_9"/>
<dbReference type="GO" id="GO:0005737">
    <property type="term" value="C:cytoplasm"/>
    <property type="evidence" value="ECO:0007669"/>
    <property type="project" value="UniProtKB-SubCell"/>
</dbReference>
<dbReference type="GO" id="GO:0005525">
    <property type="term" value="F:GTP binding"/>
    <property type="evidence" value="ECO:0007669"/>
    <property type="project" value="UniProtKB-UniRule"/>
</dbReference>
<dbReference type="GO" id="GO:0003924">
    <property type="term" value="F:GTPase activity"/>
    <property type="evidence" value="ECO:0007669"/>
    <property type="project" value="UniProtKB-UniRule"/>
</dbReference>
<dbReference type="GO" id="GO:0000287">
    <property type="term" value="F:magnesium ion binding"/>
    <property type="evidence" value="ECO:0007669"/>
    <property type="project" value="InterPro"/>
</dbReference>
<dbReference type="GO" id="GO:0042254">
    <property type="term" value="P:ribosome biogenesis"/>
    <property type="evidence" value="ECO:0007669"/>
    <property type="project" value="UniProtKB-UniRule"/>
</dbReference>
<dbReference type="CDD" id="cd01898">
    <property type="entry name" value="Obg"/>
    <property type="match status" value="1"/>
</dbReference>
<dbReference type="FunFam" id="2.70.210.12:FF:000001">
    <property type="entry name" value="GTPase Obg"/>
    <property type="match status" value="1"/>
</dbReference>
<dbReference type="FunFam" id="3.40.50.300:FF:000515">
    <property type="entry name" value="GTPase Obg"/>
    <property type="match status" value="1"/>
</dbReference>
<dbReference type="Gene3D" id="3.30.300.350">
    <property type="entry name" value="GTP-binding protein OBG, C-terminal domain"/>
    <property type="match status" value="1"/>
</dbReference>
<dbReference type="Gene3D" id="2.70.210.12">
    <property type="entry name" value="GTP1/OBG domain"/>
    <property type="match status" value="1"/>
</dbReference>
<dbReference type="Gene3D" id="3.40.50.300">
    <property type="entry name" value="P-loop containing nucleotide triphosphate hydrolases"/>
    <property type="match status" value="1"/>
</dbReference>
<dbReference type="HAMAP" id="MF_01454">
    <property type="entry name" value="GTPase_Obg"/>
    <property type="match status" value="1"/>
</dbReference>
<dbReference type="InterPro" id="IPR031167">
    <property type="entry name" value="G_OBG"/>
</dbReference>
<dbReference type="InterPro" id="IPR006073">
    <property type="entry name" value="GTP-bd"/>
</dbReference>
<dbReference type="InterPro" id="IPR014100">
    <property type="entry name" value="GTP-bd_Obg/CgtA"/>
</dbReference>
<dbReference type="InterPro" id="IPR036346">
    <property type="entry name" value="GTP-bd_prot_GTP1/OBG_C_sf"/>
</dbReference>
<dbReference type="InterPro" id="IPR006074">
    <property type="entry name" value="GTP1-OBG_CS"/>
</dbReference>
<dbReference type="InterPro" id="IPR006169">
    <property type="entry name" value="GTP1_OBG_dom"/>
</dbReference>
<dbReference type="InterPro" id="IPR036726">
    <property type="entry name" value="GTP1_OBG_dom_sf"/>
</dbReference>
<dbReference type="InterPro" id="IPR045086">
    <property type="entry name" value="OBG_GTPase"/>
</dbReference>
<dbReference type="InterPro" id="IPR015349">
    <property type="entry name" value="OCT_dom"/>
</dbReference>
<dbReference type="InterPro" id="IPR027417">
    <property type="entry name" value="P-loop_NTPase"/>
</dbReference>
<dbReference type="InterPro" id="IPR005225">
    <property type="entry name" value="Small_GTP-bd"/>
</dbReference>
<dbReference type="NCBIfam" id="TIGR02729">
    <property type="entry name" value="Obg_CgtA"/>
    <property type="match status" value="1"/>
</dbReference>
<dbReference type="NCBIfam" id="TIGR03595">
    <property type="entry name" value="Obg_CgtA_exten"/>
    <property type="match status" value="1"/>
</dbReference>
<dbReference type="NCBIfam" id="NF008954">
    <property type="entry name" value="PRK12296.1"/>
    <property type="match status" value="1"/>
</dbReference>
<dbReference type="NCBIfam" id="NF008955">
    <property type="entry name" value="PRK12297.1"/>
    <property type="match status" value="1"/>
</dbReference>
<dbReference type="NCBIfam" id="NF008956">
    <property type="entry name" value="PRK12299.1"/>
    <property type="match status" value="1"/>
</dbReference>
<dbReference type="NCBIfam" id="TIGR00231">
    <property type="entry name" value="small_GTP"/>
    <property type="match status" value="1"/>
</dbReference>
<dbReference type="PANTHER" id="PTHR11702">
    <property type="entry name" value="DEVELOPMENTALLY REGULATED GTP-BINDING PROTEIN-RELATED"/>
    <property type="match status" value="1"/>
</dbReference>
<dbReference type="PANTHER" id="PTHR11702:SF31">
    <property type="entry name" value="MITOCHONDRIAL RIBOSOME-ASSOCIATED GTPASE 2"/>
    <property type="match status" value="1"/>
</dbReference>
<dbReference type="Pfam" id="PF09269">
    <property type="entry name" value="DUF1967"/>
    <property type="match status" value="1"/>
</dbReference>
<dbReference type="Pfam" id="PF01018">
    <property type="entry name" value="GTP1_OBG"/>
    <property type="match status" value="1"/>
</dbReference>
<dbReference type="Pfam" id="PF01926">
    <property type="entry name" value="MMR_HSR1"/>
    <property type="match status" value="1"/>
</dbReference>
<dbReference type="PIRSF" id="PIRSF002401">
    <property type="entry name" value="GTP_bd_Obg/CgtA"/>
    <property type="match status" value="1"/>
</dbReference>
<dbReference type="PRINTS" id="PR00326">
    <property type="entry name" value="GTP1OBG"/>
</dbReference>
<dbReference type="SUPFAM" id="SSF102741">
    <property type="entry name" value="Obg GTP-binding protein C-terminal domain"/>
    <property type="match status" value="1"/>
</dbReference>
<dbReference type="SUPFAM" id="SSF82051">
    <property type="entry name" value="Obg GTP-binding protein N-terminal domain"/>
    <property type="match status" value="1"/>
</dbReference>
<dbReference type="SUPFAM" id="SSF52540">
    <property type="entry name" value="P-loop containing nucleoside triphosphate hydrolases"/>
    <property type="match status" value="1"/>
</dbReference>
<dbReference type="PROSITE" id="PS51710">
    <property type="entry name" value="G_OBG"/>
    <property type="match status" value="1"/>
</dbReference>
<dbReference type="PROSITE" id="PS00905">
    <property type="entry name" value="GTP1_OBG"/>
    <property type="match status" value="1"/>
</dbReference>
<dbReference type="PROSITE" id="PS51883">
    <property type="entry name" value="OBG"/>
    <property type="match status" value="1"/>
</dbReference>
<dbReference type="PROSITE" id="PS51881">
    <property type="entry name" value="OCT"/>
    <property type="match status" value="1"/>
</dbReference>
<reference key="1">
    <citation type="journal article" date="2005" name="Proc. Natl. Acad. Sci. U.S.A.">
        <title>Genome analysis of multiple pathogenic isolates of Streptococcus agalactiae: implications for the microbial 'pan-genome'.</title>
        <authorList>
            <person name="Tettelin H."/>
            <person name="Masignani V."/>
            <person name="Cieslewicz M.J."/>
            <person name="Donati C."/>
            <person name="Medini D."/>
            <person name="Ward N.L."/>
            <person name="Angiuoli S.V."/>
            <person name="Crabtree J."/>
            <person name="Jones A.L."/>
            <person name="Durkin A.S."/>
            <person name="DeBoy R.T."/>
            <person name="Davidsen T.M."/>
            <person name="Mora M."/>
            <person name="Scarselli M."/>
            <person name="Margarit y Ros I."/>
            <person name="Peterson J.D."/>
            <person name="Hauser C.R."/>
            <person name="Sundaram J.P."/>
            <person name="Nelson W.C."/>
            <person name="Madupu R."/>
            <person name="Brinkac L.M."/>
            <person name="Dodson R.J."/>
            <person name="Rosovitz M.J."/>
            <person name="Sullivan S.A."/>
            <person name="Daugherty S.C."/>
            <person name="Haft D.H."/>
            <person name="Selengut J."/>
            <person name="Gwinn M.L."/>
            <person name="Zhou L."/>
            <person name="Zafar N."/>
            <person name="Khouri H."/>
            <person name="Radune D."/>
            <person name="Dimitrov G."/>
            <person name="Watkins K."/>
            <person name="O'Connor K.J."/>
            <person name="Smith S."/>
            <person name="Utterback T.R."/>
            <person name="White O."/>
            <person name="Rubens C.E."/>
            <person name="Grandi G."/>
            <person name="Madoff L.C."/>
            <person name="Kasper D.L."/>
            <person name="Telford J.L."/>
            <person name="Wessels M.R."/>
            <person name="Rappuoli R."/>
            <person name="Fraser C.M."/>
        </authorList>
    </citation>
    <scope>NUCLEOTIDE SEQUENCE [LARGE SCALE GENOMIC DNA]</scope>
    <source>
        <strain>ATCC 27591 / A909 / CDC SS700</strain>
    </source>
</reference>
<protein>
    <recommendedName>
        <fullName evidence="1">GTPase Obg</fullName>
        <ecNumber evidence="1">3.6.5.-</ecNumber>
    </recommendedName>
    <alternativeName>
        <fullName evidence="1">GTP-binding protein Obg</fullName>
    </alternativeName>
</protein>
<comment type="function">
    <text evidence="1">An essential GTPase which binds GTP, GDP and possibly (p)ppGpp with moderate affinity, with high nucleotide exchange rates and a fairly low GTP hydrolysis rate. Plays a role in control of the cell cycle, stress response, ribosome biogenesis and in those bacteria that undergo differentiation, in morphogenesis control.</text>
</comment>
<comment type="cofactor">
    <cofactor evidence="1">
        <name>Mg(2+)</name>
        <dbReference type="ChEBI" id="CHEBI:18420"/>
    </cofactor>
</comment>
<comment type="subunit">
    <text evidence="1">Monomer.</text>
</comment>
<comment type="subcellular location">
    <subcellularLocation>
        <location evidence="1">Cytoplasm</location>
    </subcellularLocation>
</comment>
<comment type="similarity">
    <text evidence="1">Belongs to the TRAFAC class OBG-HflX-like GTPase superfamily. OBG GTPase family.</text>
</comment>
<sequence length="437" mass="48396">MSMFLDTAKISVKAGRGGDGMVAFRREKYVPNGGPWGGDGGKGGSVIFKVNEGLRTLMDFRYNRNFKAKAGEKGMTKGMHGRGAEDLIVSLPPGTTVRDATTGKVITDLVEHDQEFVVARGGRGGRGNIRFATPRNPAPEIAENGEPGEERELQLELKILADVGLVGFPSVGKSTLLSVVSAAKPKIGAYHFTTIVPNLGMVRTKSGDSFAMADLPGLIEGASQGVGLGTQFLRHIERTRVILHVIDMSASEGRDPYDDYVSINNELETYNLRLMERPQIIVANKMDMPDSEENLAAFKEKLAANYDEFDDMPMIFPISSLAHQGLENLMDATAELLANTEEFLLYDETDMQEDEAYYGFNEDERPFEITRDDDATWVLYGDKLEKLFVMTNMERDESIMKFARQLRGMGVDEALRERGAKDGDIVRIGNFEFEFVD</sequence>
<evidence type="ECO:0000255" key="1">
    <source>
        <dbReference type="HAMAP-Rule" id="MF_01454"/>
    </source>
</evidence>
<evidence type="ECO:0000255" key="2">
    <source>
        <dbReference type="PROSITE-ProRule" id="PRU01229"/>
    </source>
</evidence>
<evidence type="ECO:0000255" key="3">
    <source>
        <dbReference type="PROSITE-ProRule" id="PRU01231"/>
    </source>
</evidence>
<proteinExistence type="inferred from homology"/>
<name>OBG_STRA1</name>
<gene>
    <name evidence="1" type="primary">obg</name>
    <name type="ordered locus">SAK_1500</name>
</gene>